<name>UBCP1_HUMAN</name>
<feature type="initiator methionine" description="Removed" evidence="9 11">
    <location>
        <position position="1"/>
    </location>
</feature>
<feature type="chain" id="PRO_0000242640" description="Ubiquitin-like domain-containing CTD phosphatase 1">
    <location>
        <begin position="2"/>
        <end position="318"/>
    </location>
</feature>
<feature type="domain" description="Ubiquitin-like" evidence="2">
    <location>
        <begin position="3"/>
        <end position="81"/>
    </location>
</feature>
<feature type="domain" description="FCP1 homology" evidence="3">
    <location>
        <begin position="133"/>
        <end position="294"/>
    </location>
</feature>
<feature type="binding site" evidence="1">
    <location>
        <position position="143"/>
    </location>
    <ligand>
        <name>Mg(2+)</name>
        <dbReference type="ChEBI" id="CHEBI:18420"/>
    </ligand>
</feature>
<feature type="binding site" evidence="1">
    <location>
        <position position="145"/>
    </location>
    <ligand>
        <name>Mg(2+)</name>
        <dbReference type="ChEBI" id="CHEBI:18420"/>
    </ligand>
</feature>
<feature type="binding site" evidence="1">
    <location>
        <position position="253"/>
    </location>
    <ligand>
        <name>Mg(2+)</name>
        <dbReference type="ChEBI" id="CHEBI:18420"/>
    </ligand>
</feature>
<feature type="modified residue" description="N-acetylalanine" evidence="9 11">
    <location>
        <position position="2"/>
    </location>
</feature>
<feature type="modified residue" description="N6-acetyllysine" evidence="10">
    <location>
        <position position="117"/>
    </location>
</feature>
<feature type="mutagenesis site" description="No effect on proteasome binding or nuclear localization." evidence="5">
    <original>G</original>
    <variation>E</variation>
    <location>
        <position position="10"/>
    </location>
</feature>
<feature type="mutagenesis site" description="Aberrant diffuse pan-cellular localization and loss of binding to PSMD2." evidence="5 6">
    <original>K</original>
    <variation>A</variation>
    <location>
        <position position="44"/>
    </location>
</feature>
<feature type="mutagenesis site" description="No effect on proteasome binding or nuclear localization." evidence="5">
    <original>L</original>
    <variation>A</variation>
    <location>
        <position position="46"/>
    </location>
</feature>
<feature type="mutagenesis site" description="Loss of binding to PSMD2 and PSMC2, and loss of inhibitory effect on proteasome activity; when associated with E-51." evidence="6">
    <original>K</original>
    <variation>E</variation>
    <location>
        <position position="49"/>
    </location>
</feature>
<feature type="mutagenesis site" description="Loss of binding to PSMD2 and PSMC2, and loss of inhibitory effect on proteasome activity; when associated with E-49." evidence="6">
    <original>K</original>
    <variation>E</variation>
    <location>
        <position position="51"/>
    </location>
</feature>
<feature type="mutagenesis site" description="Loss of catalytic activity. No effect on interaction with 19S regulatory particle but loss of catalytic activity; when associated with A-145." evidence="5 6">
    <original>D</original>
    <variation>A</variation>
    <location>
        <position position="143"/>
    </location>
</feature>
<feature type="mutagenesis site" description="No effect on interaction with 19S regulatory particle but loss of catalytic activity; when associated with A-143." evidence="6">
    <original>D</original>
    <variation>A</variation>
    <location>
        <position position="145"/>
    </location>
</feature>
<feature type="sequence conflict" description="In Ref. 2; BAB71628." evidence="8" ref="2">
    <original>E</original>
    <variation>G</variation>
    <location>
        <position position="83"/>
    </location>
</feature>
<feature type="strand" evidence="12">
    <location>
        <begin position="5"/>
        <end position="9"/>
    </location>
</feature>
<feature type="strand" evidence="12">
    <location>
        <begin position="12"/>
        <end position="16"/>
    </location>
</feature>
<feature type="turn" evidence="13">
    <location>
        <begin position="21"/>
        <end position="23"/>
    </location>
</feature>
<feature type="helix" evidence="12">
    <location>
        <begin position="25"/>
        <end position="35"/>
    </location>
</feature>
<feature type="turn" evidence="12">
    <location>
        <begin position="39"/>
        <end position="41"/>
    </location>
</feature>
<feature type="strand" evidence="12">
    <location>
        <begin position="46"/>
        <end position="49"/>
    </location>
</feature>
<feature type="strand" evidence="14">
    <location>
        <begin position="57"/>
        <end position="59"/>
    </location>
</feature>
<feature type="helix" evidence="12">
    <location>
        <begin position="61"/>
        <end position="64"/>
    </location>
</feature>
<feature type="helix" evidence="12">
    <location>
        <begin position="68"/>
        <end position="70"/>
    </location>
</feature>
<feature type="strand" evidence="14">
    <location>
        <begin position="71"/>
        <end position="76"/>
    </location>
</feature>
<dbReference type="EC" id="3.1.3.16" evidence="4 5 6"/>
<dbReference type="EMBL" id="AY444562">
    <property type="protein sequence ID" value="AAS68538.1"/>
    <property type="molecule type" value="mRNA"/>
</dbReference>
<dbReference type="EMBL" id="AK057996">
    <property type="protein sequence ID" value="BAB71628.1"/>
    <property type="molecule type" value="mRNA"/>
</dbReference>
<dbReference type="EMBL" id="CH471062">
    <property type="protein sequence ID" value="EAW61577.1"/>
    <property type="molecule type" value="Genomic_DNA"/>
</dbReference>
<dbReference type="EMBL" id="CH471062">
    <property type="protein sequence ID" value="EAW61578.1"/>
    <property type="molecule type" value="Genomic_DNA"/>
</dbReference>
<dbReference type="EMBL" id="BC013425">
    <property type="protein sequence ID" value="AAH13425.2"/>
    <property type="molecule type" value="mRNA"/>
</dbReference>
<dbReference type="CCDS" id="CCDS4345.1"/>
<dbReference type="RefSeq" id="NP_659486.2">
    <property type="nucleotide sequence ID" value="NM_145049.5"/>
</dbReference>
<dbReference type="PDB" id="2KX3">
    <property type="method" value="NMR"/>
    <property type="chains" value="A=1-81"/>
</dbReference>
<dbReference type="PDB" id="2LGD">
    <property type="method" value="NMR"/>
    <property type="chains" value="A=1-81"/>
</dbReference>
<dbReference type="PDB" id="2M17">
    <property type="method" value="NMR"/>
    <property type="chains" value="A=1-81"/>
</dbReference>
<dbReference type="PDBsum" id="2KX3"/>
<dbReference type="PDBsum" id="2LGD"/>
<dbReference type="PDBsum" id="2M17"/>
<dbReference type="BMRB" id="Q8WVY7"/>
<dbReference type="SMR" id="Q8WVY7"/>
<dbReference type="BioGRID" id="126404">
    <property type="interactions" value="105"/>
</dbReference>
<dbReference type="FunCoup" id="Q8WVY7">
    <property type="interactions" value="3639"/>
</dbReference>
<dbReference type="IntAct" id="Q8WVY7">
    <property type="interactions" value="65"/>
</dbReference>
<dbReference type="MINT" id="Q8WVY7"/>
<dbReference type="STRING" id="9606.ENSP00000296786"/>
<dbReference type="BindingDB" id="Q8WVY7"/>
<dbReference type="ChEMBL" id="CHEMBL3317333"/>
<dbReference type="DEPOD" id="UBLCP1"/>
<dbReference type="GlyGen" id="Q8WVY7">
    <property type="glycosylation" value="1 site, 1 O-linked glycan (1 site)"/>
</dbReference>
<dbReference type="iPTMnet" id="Q8WVY7"/>
<dbReference type="PhosphoSitePlus" id="Q8WVY7"/>
<dbReference type="BioMuta" id="UBLCP1"/>
<dbReference type="DMDM" id="74751564"/>
<dbReference type="jPOST" id="Q8WVY7"/>
<dbReference type="MassIVE" id="Q8WVY7"/>
<dbReference type="PaxDb" id="9606-ENSP00000296786"/>
<dbReference type="PeptideAtlas" id="Q8WVY7"/>
<dbReference type="ProteomicsDB" id="74835"/>
<dbReference type="Pumba" id="Q8WVY7"/>
<dbReference type="Antibodypedia" id="28498">
    <property type="antibodies" value="184 antibodies from 23 providers"/>
</dbReference>
<dbReference type="DNASU" id="134510"/>
<dbReference type="Ensembl" id="ENST00000296786.8">
    <property type="protein sequence ID" value="ENSP00000296786.6"/>
    <property type="gene ID" value="ENSG00000164332.8"/>
</dbReference>
<dbReference type="GeneID" id="134510"/>
<dbReference type="KEGG" id="hsa:134510"/>
<dbReference type="MANE-Select" id="ENST00000296786.8">
    <property type="protein sequence ID" value="ENSP00000296786.6"/>
    <property type="RefSeq nucleotide sequence ID" value="NM_145049.5"/>
    <property type="RefSeq protein sequence ID" value="NP_659486.2"/>
</dbReference>
<dbReference type="UCSC" id="uc003lxq.2">
    <property type="organism name" value="human"/>
</dbReference>
<dbReference type="AGR" id="HGNC:28110"/>
<dbReference type="CTD" id="134510"/>
<dbReference type="DisGeNET" id="134510"/>
<dbReference type="GeneCards" id="UBLCP1"/>
<dbReference type="HGNC" id="HGNC:28110">
    <property type="gene designation" value="UBLCP1"/>
</dbReference>
<dbReference type="HPA" id="ENSG00000164332">
    <property type="expression patterns" value="Low tissue specificity"/>
</dbReference>
<dbReference type="MIM" id="609867">
    <property type="type" value="gene"/>
</dbReference>
<dbReference type="neXtProt" id="NX_Q8WVY7"/>
<dbReference type="OpenTargets" id="ENSG00000164332"/>
<dbReference type="PharmGKB" id="PA142670646"/>
<dbReference type="VEuPathDB" id="HostDB:ENSG00000164332"/>
<dbReference type="eggNOG" id="KOG1605">
    <property type="taxonomic scope" value="Eukaryota"/>
</dbReference>
<dbReference type="eggNOG" id="KOG1872">
    <property type="taxonomic scope" value="Eukaryota"/>
</dbReference>
<dbReference type="GeneTree" id="ENSGT00390000010107"/>
<dbReference type="HOGENOM" id="CLU_046931_1_0_1"/>
<dbReference type="InParanoid" id="Q8WVY7"/>
<dbReference type="OMA" id="TVHTPKY"/>
<dbReference type="OrthoDB" id="1711508at2759"/>
<dbReference type="PAN-GO" id="Q8WVY7">
    <property type="GO annotations" value="3 GO annotations based on evolutionary models"/>
</dbReference>
<dbReference type="PhylomeDB" id="Q8WVY7"/>
<dbReference type="TreeFam" id="TF323786"/>
<dbReference type="PathwayCommons" id="Q8WVY7"/>
<dbReference type="SignaLink" id="Q8WVY7"/>
<dbReference type="BioGRID-ORCS" id="134510">
    <property type="hits" value="14 hits in 1142 CRISPR screens"/>
</dbReference>
<dbReference type="ChiTaRS" id="UBLCP1">
    <property type="organism name" value="human"/>
</dbReference>
<dbReference type="EvolutionaryTrace" id="Q8WVY7"/>
<dbReference type="GenomeRNAi" id="134510"/>
<dbReference type="Pharos" id="Q8WVY7">
    <property type="development level" value="Tchem"/>
</dbReference>
<dbReference type="PRO" id="PR:Q8WVY7"/>
<dbReference type="Proteomes" id="UP000005640">
    <property type="component" value="Chromosome 5"/>
</dbReference>
<dbReference type="RNAct" id="Q8WVY7">
    <property type="molecule type" value="protein"/>
</dbReference>
<dbReference type="Bgee" id="ENSG00000164332">
    <property type="expression patterns" value="Expressed in oocyte and 189 other cell types or tissues"/>
</dbReference>
<dbReference type="GO" id="GO:0005730">
    <property type="term" value="C:nucleolus"/>
    <property type="evidence" value="ECO:0000314"/>
    <property type="project" value="HPA"/>
</dbReference>
<dbReference type="GO" id="GO:0005654">
    <property type="term" value="C:nucleoplasm"/>
    <property type="evidence" value="ECO:0000314"/>
    <property type="project" value="HPA"/>
</dbReference>
<dbReference type="GO" id="GO:0005634">
    <property type="term" value="C:nucleus"/>
    <property type="evidence" value="ECO:0000314"/>
    <property type="project" value="FlyBase"/>
</dbReference>
<dbReference type="GO" id="GO:0046872">
    <property type="term" value="F:metal ion binding"/>
    <property type="evidence" value="ECO:0007669"/>
    <property type="project" value="UniProtKB-KW"/>
</dbReference>
<dbReference type="GO" id="GO:1904855">
    <property type="term" value="F:proteasome regulatory particle binding"/>
    <property type="evidence" value="ECO:0000353"/>
    <property type="project" value="UniProtKB"/>
</dbReference>
<dbReference type="GO" id="GO:0004722">
    <property type="term" value="F:protein serine/threonine phosphatase activity"/>
    <property type="evidence" value="ECO:0000314"/>
    <property type="project" value="UniProtKB"/>
</dbReference>
<dbReference type="GO" id="GO:0032780">
    <property type="term" value="P:negative regulation of ATP-dependent activity"/>
    <property type="evidence" value="ECO:0000314"/>
    <property type="project" value="UniProtKB"/>
</dbReference>
<dbReference type="GO" id="GO:0090364">
    <property type="term" value="P:regulation of proteasome assembly"/>
    <property type="evidence" value="ECO:0000315"/>
    <property type="project" value="UniProtKB"/>
</dbReference>
<dbReference type="CDD" id="cd01813">
    <property type="entry name" value="Ubl_UBLCP1"/>
    <property type="match status" value="1"/>
</dbReference>
<dbReference type="FunFam" id="3.40.50.1000:FF:000050">
    <property type="entry name" value="Ubiquitin-like domain-containing CTD phosphatase 1"/>
    <property type="match status" value="1"/>
</dbReference>
<dbReference type="FunFam" id="3.10.20.90:FF:000060">
    <property type="entry name" value="ubiquitin-like domain-containing CTD phosphatase 1"/>
    <property type="match status" value="1"/>
</dbReference>
<dbReference type="Gene3D" id="3.40.50.1000">
    <property type="entry name" value="HAD superfamily/HAD-like"/>
    <property type="match status" value="1"/>
</dbReference>
<dbReference type="Gene3D" id="3.10.20.90">
    <property type="entry name" value="Phosphatidylinositol 3-kinase Catalytic Subunit, Chain A, domain 1"/>
    <property type="match status" value="1"/>
</dbReference>
<dbReference type="InterPro" id="IPR004274">
    <property type="entry name" value="FCP1_dom"/>
</dbReference>
<dbReference type="InterPro" id="IPR036412">
    <property type="entry name" value="HAD-like_sf"/>
</dbReference>
<dbReference type="InterPro" id="IPR011943">
    <property type="entry name" value="HAD-SF_hydro_IIID"/>
</dbReference>
<dbReference type="InterPro" id="IPR023214">
    <property type="entry name" value="HAD_sf"/>
</dbReference>
<dbReference type="InterPro" id="IPR000626">
    <property type="entry name" value="Ubiquitin-like_dom"/>
</dbReference>
<dbReference type="InterPro" id="IPR029071">
    <property type="entry name" value="Ubiquitin-like_domsf"/>
</dbReference>
<dbReference type="InterPro" id="IPR051658">
    <property type="entry name" value="UBLCP1"/>
</dbReference>
<dbReference type="NCBIfam" id="TIGR02245">
    <property type="entry name" value="HAD_IIID1"/>
    <property type="match status" value="1"/>
</dbReference>
<dbReference type="PANTHER" id="PTHR48493">
    <property type="entry name" value="UBIQUITIN-LIKE DOMAIN-CONTAINING CTD PHOSPHATASE 1"/>
    <property type="match status" value="1"/>
</dbReference>
<dbReference type="PANTHER" id="PTHR48493:SF1">
    <property type="entry name" value="UBIQUITIN-LIKE DOMAIN-CONTAINING CTD PHOSPHATASE 1"/>
    <property type="match status" value="1"/>
</dbReference>
<dbReference type="Pfam" id="PF03031">
    <property type="entry name" value="NIF"/>
    <property type="match status" value="1"/>
</dbReference>
<dbReference type="Pfam" id="PF00240">
    <property type="entry name" value="ubiquitin"/>
    <property type="match status" value="1"/>
</dbReference>
<dbReference type="SMART" id="SM00577">
    <property type="entry name" value="CPDc"/>
    <property type="match status" value="1"/>
</dbReference>
<dbReference type="SMART" id="SM00213">
    <property type="entry name" value="UBQ"/>
    <property type="match status" value="1"/>
</dbReference>
<dbReference type="SUPFAM" id="SSF56784">
    <property type="entry name" value="HAD-like"/>
    <property type="match status" value="1"/>
</dbReference>
<dbReference type="SUPFAM" id="SSF54236">
    <property type="entry name" value="Ubiquitin-like"/>
    <property type="match status" value="1"/>
</dbReference>
<dbReference type="PROSITE" id="PS50969">
    <property type="entry name" value="FCP1"/>
    <property type="match status" value="1"/>
</dbReference>
<dbReference type="PROSITE" id="PS50053">
    <property type="entry name" value="UBIQUITIN_2"/>
    <property type="match status" value="1"/>
</dbReference>
<proteinExistence type="evidence at protein level"/>
<accession>Q8WVY7</accession>
<accession>D3DQJ7</accession>
<accession>Q96DK5</accession>
<gene>
    <name type="primary">UBLCP1</name>
</gene>
<comment type="function">
    <text evidence="5 6 7">Dephosphorylates 26S nuclear proteasomes, thereby decreasing their proteolytic activity (PubMed:21949367, PubMed:28539385). Recruited to the 19S regulatory particle of the 26S proteasome through its interaction with 19S component PSMD2/RPN1 (PubMed:28539385). Once recruited, dephosphorylates 19S component PSMC2/RPT1 which impairs PSMC2 ATPase activity and disrupts 26S proteasome assembly (PubMed:28539385). Has also been reported to stimulate the proteolytic activity of the 26S proteasome (PubMed:32071216).</text>
</comment>
<comment type="catalytic activity">
    <reaction evidence="4 5 6">
        <text>O-phospho-L-seryl-[protein] + H2O = L-seryl-[protein] + phosphate</text>
        <dbReference type="Rhea" id="RHEA:20629"/>
        <dbReference type="Rhea" id="RHEA-COMP:9863"/>
        <dbReference type="Rhea" id="RHEA-COMP:11604"/>
        <dbReference type="ChEBI" id="CHEBI:15377"/>
        <dbReference type="ChEBI" id="CHEBI:29999"/>
        <dbReference type="ChEBI" id="CHEBI:43474"/>
        <dbReference type="ChEBI" id="CHEBI:83421"/>
        <dbReference type="EC" id="3.1.3.16"/>
    </reaction>
</comment>
<comment type="catalytic activity">
    <reaction evidence="4 6">
        <text>O-phospho-L-threonyl-[protein] + H2O = L-threonyl-[protein] + phosphate</text>
        <dbReference type="Rhea" id="RHEA:47004"/>
        <dbReference type="Rhea" id="RHEA-COMP:11060"/>
        <dbReference type="Rhea" id="RHEA-COMP:11605"/>
        <dbReference type="ChEBI" id="CHEBI:15377"/>
        <dbReference type="ChEBI" id="CHEBI:30013"/>
        <dbReference type="ChEBI" id="CHEBI:43474"/>
        <dbReference type="ChEBI" id="CHEBI:61977"/>
        <dbReference type="EC" id="3.1.3.16"/>
    </reaction>
</comment>
<comment type="cofactor">
    <cofactor evidence="4">
        <name>Mg(2+)</name>
        <dbReference type="ChEBI" id="CHEBI:18420"/>
    </cofactor>
</comment>
<comment type="biophysicochemical properties">
    <phDependence>
        <text evidence="4">Optimum pH is 5.0.</text>
    </phDependence>
</comment>
<comment type="subunit">
    <text evidence="6">Interacts (via ubiquitin-like domain) with PSMD2/RPN1 (via C-terminus) which is a 19S regulatory particle subunit of the 26S proteasome.</text>
</comment>
<comment type="interaction">
    <interactant intactId="EBI-750011">
        <id>Q8WVY7</id>
    </interactant>
    <interactant intactId="EBI-357648">
        <id>Q13200</id>
        <label>PSMD2</label>
    </interactant>
    <organismsDiffer>false</organismsDiffer>
    <experiments>14</experiments>
</comment>
<comment type="subcellular location">
    <subcellularLocation>
        <location evidence="4 5 6">Nucleus</location>
    </subcellularLocation>
    <text>Colocalizes with nuclear proteasomes.</text>
</comment>
<comment type="tissue specificity">
    <text evidence="4">Broadly expressed, with highest levels in placenta, lung, testis and ovary. Up-regulated in tumor tissues.</text>
</comment>
<comment type="domain">
    <text evidence="6">The Ubiquitin-like domain mediates interaction with proteasomes.</text>
</comment>
<reference key="1">
    <citation type="journal article" date="2005" name="Biochem. Biophys. Res. Commun.">
        <title>Cloning and characterization of a novel RNA polymerase II C-terminal domain phosphatase.</title>
        <authorList>
            <person name="Zheng H."/>
            <person name="Ji C."/>
            <person name="Gu S."/>
            <person name="Shi B."/>
            <person name="Wang J."/>
            <person name="Xie Y."/>
            <person name="Mao Y."/>
        </authorList>
    </citation>
    <scope>NUCLEOTIDE SEQUENCE [MRNA]</scope>
    <scope>TISSUE SPECIFICITY</scope>
    <scope>SUBCELLULAR LOCATION</scope>
    <scope>CATALYTIC ACTIVITY</scope>
    <scope>COFACTOR</scope>
    <scope>BIOPHYSICOCHEMICAL PROPERTIES</scope>
    <scope>PRELIMINARY FUNCTION</scope>
    <source>
        <tissue>Fetal brain</tissue>
    </source>
</reference>
<reference key="2">
    <citation type="journal article" date="2004" name="Nat. Genet.">
        <title>Complete sequencing and characterization of 21,243 full-length human cDNAs.</title>
        <authorList>
            <person name="Ota T."/>
            <person name="Suzuki Y."/>
            <person name="Nishikawa T."/>
            <person name="Otsuki T."/>
            <person name="Sugiyama T."/>
            <person name="Irie R."/>
            <person name="Wakamatsu A."/>
            <person name="Hayashi K."/>
            <person name="Sato H."/>
            <person name="Nagai K."/>
            <person name="Kimura K."/>
            <person name="Makita H."/>
            <person name="Sekine M."/>
            <person name="Obayashi M."/>
            <person name="Nishi T."/>
            <person name="Shibahara T."/>
            <person name="Tanaka T."/>
            <person name="Ishii S."/>
            <person name="Yamamoto J."/>
            <person name="Saito K."/>
            <person name="Kawai Y."/>
            <person name="Isono Y."/>
            <person name="Nakamura Y."/>
            <person name="Nagahari K."/>
            <person name="Murakami K."/>
            <person name="Yasuda T."/>
            <person name="Iwayanagi T."/>
            <person name="Wagatsuma M."/>
            <person name="Shiratori A."/>
            <person name="Sudo H."/>
            <person name="Hosoiri T."/>
            <person name="Kaku Y."/>
            <person name="Kodaira H."/>
            <person name="Kondo H."/>
            <person name="Sugawara M."/>
            <person name="Takahashi M."/>
            <person name="Kanda K."/>
            <person name="Yokoi T."/>
            <person name="Furuya T."/>
            <person name="Kikkawa E."/>
            <person name="Omura Y."/>
            <person name="Abe K."/>
            <person name="Kamihara K."/>
            <person name="Katsuta N."/>
            <person name="Sato K."/>
            <person name="Tanikawa M."/>
            <person name="Yamazaki M."/>
            <person name="Ninomiya K."/>
            <person name="Ishibashi T."/>
            <person name="Yamashita H."/>
            <person name="Murakawa K."/>
            <person name="Fujimori K."/>
            <person name="Tanai H."/>
            <person name="Kimata M."/>
            <person name="Watanabe M."/>
            <person name="Hiraoka S."/>
            <person name="Chiba Y."/>
            <person name="Ishida S."/>
            <person name="Ono Y."/>
            <person name="Takiguchi S."/>
            <person name="Watanabe S."/>
            <person name="Yosida M."/>
            <person name="Hotuta T."/>
            <person name="Kusano J."/>
            <person name="Kanehori K."/>
            <person name="Takahashi-Fujii A."/>
            <person name="Hara H."/>
            <person name="Tanase T.-O."/>
            <person name="Nomura Y."/>
            <person name="Togiya S."/>
            <person name="Komai F."/>
            <person name="Hara R."/>
            <person name="Takeuchi K."/>
            <person name="Arita M."/>
            <person name="Imose N."/>
            <person name="Musashino K."/>
            <person name="Yuuki H."/>
            <person name="Oshima A."/>
            <person name="Sasaki N."/>
            <person name="Aotsuka S."/>
            <person name="Yoshikawa Y."/>
            <person name="Matsunawa H."/>
            <person name="Ichihara T."/>
            <person name="Shiohata N."/>
            <person name="Sano S."/>
            <person name="Moriya S."/>
            <person name="Momiyama H."/>
            <person name="Satoh N."/>
            <person name="Takami S."/>
            <person name="Terashima Y."/>
            <person name="Suzuki O."/>
            <person name="Nakagawa S."/>
            <person name="Senoh A."/>
            <person name="Mizoguchi H."/>
            <person name="Goto Y."/>
            <person name="Shimizu F."/>
            <person name="Wakebe H."/>
            <person name="Hishigaki H."/>
            <person name="Watanabe T."/>
            <person name="Sugiyama A."/>
            <person name="Takemoto M."/>
            <person name="Kawakami B."/>
            <person name="Yamazaki M."/>
            <person name="Watanabe K."/>
            <person name="Kumagai A."/>
            <person name="Itakura S."/>
            <person name="Fukuzumi Y."/>
            <person name="Fujimori Y."/>
            <person name="Komiyama M."/>
            <person name="Tashiro H."/>
            <person name="Tanigami A."/>
            <person name="Fujiwara T."/>
            <person name="Ono T."/>
            <person name="Yamada K."/>
            <person name="Fujii Y."/>
            <person name="Ozaki K."/>
            <person name="Hirao M."/>
            <person name="Ohmori Y."/>
            <person name="Kawabata A."/>
            <person name="Hikiji T."/>
            <person name="Kobatake N."/>
            <person name="Inagaki H."/>
            <person name="Ikema Y."/>
            <person name="Okamoto S."/>
            <person name="Okitani R."/>
            <person name="Kawakami T."/>
            <person name="Noguchi S."/>
            <person name="Itoh T."/>
            <person name="Shigeta K."/>
            <person name="Senba T."/>
            <person name="Matsumura K."/>
            <person name="Nakajima Y."/>
            <person name="Mizuno T."/>
            <person name="Morinaga M."/>
            <person name="Sasaki M."/>
            <person name="Togashi T."/>
            <person name="Oyama M."/>
            <person name="Hata H."/>
            <person name="Watanabe M."/>
            <person name="Komatsu T."/>
            <person name="Mizushima-Sugano J."/>
            <person name="Satoh T."/>
            <person name="Shirai Y."/>
            <person name="Takahashi Y."/>
            <person name="Nakagawa K."/>
            <person name="Okumura K."/>
            <person name="Nagase T."/>
            <person name="Nomura N."/>
            <person name="Kikuchi H."/>
            <person name="Masuho Y."/>
            <person name="Yamashita R."/>
            <person name="Nakai K."/>
            <person name="Yada T."/>
            <person name="Nakamura Y."/>
            <person name="Ohara O."/>
            <person name="Isogai T."/>
            <person name="Sugano S."/>
        </authorList>
    </citation>
    <scope>NUCLEOTIDE SEQUENCE [LARGE SCALE MRNA]</scope>
    <source>
        <tissue>Gastric mucosa</tissue>
    </source>
</reference>
<reference key="3">
    <citation type="submission" date="2005-09" db="EMBL/GenBank/DDBJ databases">
        <authorList>
            <person name="Mural R.J."/>
            <person name="Istrail S."/>
            <person name="Sutton G.G."/>
            <person name="Florea L."/>
            <person name="Halpern A.L."/>
            <person name="Mobarry C.M."/>
            <person name="Lippert R."/>
            <person name="Walenz B."/>
            <person name="Shatkay H."/>
            <person name="Dew I."/>
            <person name="Miller J.R."/>
            <person name="Flanigan M.J."/>
            <person name="Edwards N.J."/>
            <person name="Bolanos R."/>
            <person name="Fasulo D."/>
            <person name="Halldorsson B.V."/>
            <person name="Hannenhalli S."/>
            <person name="Turner R."/>
            <person name="Yooseph S."/>
            <person name="Lu F."/>
            <person name="Nusskern D.R."/>
            <person name="Shue B.C."/>
            <person name="Zheng X.H."/>
            <person name="Zhong F."/>
            <person name="Delcher A.L."/>
            <person name="Huson D.H."/>
            <person name="Kravitz S.A."/>
            <person name="Mouchard L."/>
            <person name="Reinert K."/>
            <person name="Remington K.A."/>
            <person name="Clark A.G."/>
            <person name="Waterman M.S."/>
            <person name="Eichler E.E."/>
            <person name="Adams M.D."/>
            <person name="Hunkapiller M.W."/>
            <person name="Myers E.W."/>
            <person name="Venter J.C."/>
        </authorList>
    </citation>
    <scope>NUCLEOTIDE SEQUENCE [LARGE SCALE GENOMIC DNA]</scope>
</reference>
<reference key="4">
    <citation type="journal article" date="2004" name="Genome Res.">
        <title>The status, quality, and expansion of the NIH full-length cDNA project: the Mammalian Gene Collection (MGC).</title>
        <authorList>
            <consortium name="The MGC Project Team"/>
        </authorList>
    </citation>
    <scope>NUCLEOTIDE SEQUENCE [LARGE SCALE MRNA]</scope>
    <source>
        <tissue>Lung</tissue>
    </source>
</reference>
<reference key="5">
    <citation type="journal article" date="2009" name="Anal. Chem.">
        <title>Lys-N and trypsin cover complementary parts of the phosphoproteome in a refined SCX-based approach.</title>
        <authorList>
            <person name="Gauci S."/>
            <person name="Helbig A.O."/>
            <person name="Slijper M."/>
            <person name="Krijgsveld J."/>
            <person name="Heck A.J."/>
            <person name="Mohammed S."/>
        </authorList>
    </citation>
    <scope>ACETYLATION [LARGE SCALE ANALYSIS] AT ALA-2</scope>
    <scope>CLEAVAGE OF INITIATOR METHIONINE [LARGE SCALE ANALYSIS]</scope>
    <scope>IDENTIFICATION BY MASS SPECTROMETRY [LARGE SCALE ANALYSIS]</scope>
</reference>
<reference key="6">
    <citation type="journal article" date="2009" name="Science">
        <title>Lysine acetylation targets protein complexes and co-regulates major cellular functions.</title>
        <authorList>
            <person name="Choudhary C."/>
            <person name="Kumar C."/>
            <person name="Gnad F."/>
            <person name="Nielsen M.L."/>
            <person name="Rehman M."/>
            <person name="Walther T.C."/>
            <person name="Olsen J.V."/>
            <person name="Mann M."/>
        </authorList>
    </citation>
    <scope>ACETYLATION [LARGE SCALE ANALYSIS] AT LYS-117</scope>
    <scope>IDENTIFICATION BY MASS SPECTROMETRY [LARGE SCALE ANALYSIS]</scope>
</reference>
<reference key="7">
    <citation type="journal article" date="2011" name="BMC Syst. Biol.">
        <title>Initial characterization of the human central proteome.</title>
        <authorList>
            <person name="Burkard T.R."/>
            <person name="Planyavsky M."/>
            <person name="Kaupe I."/>
            <person name="Breitwieser F.P."/>
            <person name="Buerckstuemmer T."/>
            <person name="Bennett K.L."/>
            <person name="Superti-Furga G."/>
            <person name="Colinge J."/>
        </authorList>
    </citation>
    <scope>IDENTIFICATION BY MASS SPECTROMETRY [LARGE SCALE ANALYSIS]</scope>
</reference>
<reference key="8">
    <citation type="journal article" date="2011" name="Proc. Natl. Acad. Sci. U.S.A.">
        <title>UBLCP1 is a 26S proteasome phosphatase that regulates nuclear proteasome activity.</title>
        <authorList>
            <person name="Guo X."/>
            <person name="Engel J.L."/>
            <person name="Xiao J."/>
            <person name="Tagliabracci V.S."/>
            <person name="Wang X."/>
            <person name="Huang L."/>
            <person name="Dixon J.E."/>
        </authorList>
    </citation>
    <scope>FUNCTION</scope>
    <scope>CATALYTIC ACTIVITY</scope>
    <scope>SUBCELLULAR LOCATION</scope>
    <scope>MUTAGENESIS OF GLY-10; LYS-44; LEU-46 AND ASP-143</scope>
</reference>
<reference key="9">
    <citation type="journal article" date="2012" name="Mol. Cell. Proteomics">
        <title>Comparative large-scale characterisation of plant vs. mammal proteins reveals similar and idiosyncratic N-alpha acetylation features.</title>
        <authorList>
            <person name="Bienvenut W.V."/>
            <person name="Sumpton D."/>
            <person name="Martinez A."/>
            <person name="Lilla S."/>
            <person name="Espagne C."/>
            <person name="Meinnel T."/>
            <person name="Giglione C."/>
        </authorList>
    </citation>
    <scope>ACETYLATION [LARGE SCALE ANALYSIS] AT ALA-2</scope>
    <scope>CLEAVAGE OF INITIATOR METHIONINE [LARGE SCALE ANALYSIS]</scope>
    <scope>IDENTIFICATION BY MASS SPECTROMETRY [LARGE SCALE ANALYSIS]</scope>
</reference>
<reference key="10">
    <citation type="journal article" date="2017" name="Open Biol.">
        <title>Phosphatase UBLCP1 controls proteasome assembly.</title>
        <authorList>
            <person name="Sun S."/>
            <person name="Liu S."/>
            <person name="Zhang Z."/>
            <person name="Zeng W."/>
            <person name="Sun C."/>
            <person name="Tao T."/>
            <person name="Lin X."/>
            <person name="Feng X.H."/>
        </authorList>
    </citation>
    <scope>FUNCTION</scope>
    <scope>CATALYTIC ACTIVITY</scope>
    <scope>INTERACTION WITH PSMD2</scope>
    <scope>SUBCELLULAR LOCATION</scope>
    <scope>DOMAIN</scope>
    <scope>MUTAGENESIS OF LYS-44; LYS-49; LYS-51; ASP-143 AND ASP-145</scope>
</reference>
<reference key="11">
    <citation type="journal article" date="2020" name="Proc. Natl. Acad. Sci. U.S.A.">
        <title>Proteins containing ubiquitin-like (Ubl) domains not only bind to 26S proteasomes but also induce their activation.</title>
        <authorList>
            <person name="Collins G.A."/>
            <person name="Goldberg A.L."/>
        </authorList>
    </citation>
    <scope>FUNCTION</scope>
</reference>
<evidence type="ECO:0000250" key="1">
    <source>
        <dbReference type="UniProtKB" id="Q9XZ16"/>
    </source>
</evidence>
<evidence type="ECO:0000255" key="2">
    <source>
        <dbReference type="PROSITE-ProRule" id="PRU00214"/>
    </source>
</evidence>
<evidence type="ECO:0000255" key="3">
    <source>
        <dbReference type="PROSITE-ProRule" id="PRU00336"/>
    </source>
</evidence>
<evidence type="ECO:0000269" key="4">
    <source>
    </source>
</evidence>
<evidence type="ECO:0000269" key="5">
    <source>
    </source>
</evidence>
<evidence type="ECO:0000269" key="6">
    <source>
    </source>
</evidence>
<evidence type="ECO:0000269" key="7">
    <source>
    </source>
</evidence>
<evidence type="ECO:0000305" key="8"/>
<evidence type="ECO:0007744" key="9">
    <source>
    </source>
</evidence>
<evidence type="ECO:0007744" key="10">
    <source>
    </source>
</evidence>
<evidence type="ECO:0007744" key="11">
    <source>
    </source>
</evidence>
<evidence type="ECO:0007829" key="12">
    <source>
        <dbReference type="PDB" id="2KX3"/>
    </source>
</evidence>
<evidence type="ECO:0007829" key="13">
    <source>
        <dbReference type="PDB" id="2LGD"/>
    </source>
</evidence>
<evidence type="ECO:0007829" key="14">
    <source>
        <dbReference type="PDB" id="2M17"/>
    </source>
</evidence>
<sequence length="318" mass="36805">MALPIIVKWGGQEYSVTTLSEDDTVLDLKQFLKTLTGVLPERQKLLGLKVKGKPAENDVKLGALKLKPNTKIMMMGTREESLEDVLGPPPDNDDVVNDFDIEDEVVEVENREENLLKISRRVKEYKVEILNPPREGKKLLVLDVDYTLFDHRSCAETGVELMRPYLHEFLTSAYEDYDIVIWSATNMKWIEAKMKELGVSTNANYKITFMLDSAAMITVHTPRRGLIDVKPLGVIWGKFSEFYSKKNTIMFDDIGRNFLMNPQNGLKIRPFMKAHLNRDKDKELLKLTQYLKEIAKLDDFLDLNHKYWERYLSKKQGQ</sequence>
<organism>
    <name type="scientific">Homo sapiens</name>
    <name type="common">Human</name>
    <dbReference type="NCBI Taxonomy" id="9606"/>
    <lineage>
        <taxon>Eukaryota</taxon>
        <taxon>Metazoa</taxon>
        <taxon>Chordata</taxon>
        <taxon>Craniata</taxon>
        <taxon>Vertebrata</taxon>
        <taxon>Euteleostomi</taxon>
        <taxon>Mammalia</taxon>
        <taxon>Eutheria</taxon>
        <taxon>Euarchontoglires</taxon>
        <taxon>Primates</taxon>
        <taxon>Haplorrhini</taxon>
        <taxon>Catarrhini</taxon>
        <taxon>Hominidae</taxon>
        <taxon>Homo</taxon>
    </lineage>
</organism>
<keyword id="KW-0002">3D-structure</keyword>
<keyword id="KW-0007">Acetylation</keyword>
<keyword id="KW-0378">Hydrolase</keyword>
<keyword id="KW-0460">Magnesium</keyword>
<keyword id="KW-0479">Metal-binding</keyword>
<keyword id="KW-0539">Nucleus</keyword>
<keyword id="KW-0904">Protein phosphatase</keyword>
<keyword id="KW-1267">Proteomics identification</keyword>
<keyword id="KW-1185">Reference proteome</keyword>
<protein>
    <recommendedName>
        <fullName>Ubiquitin-like domain-containing CTD phosphatase 1</fullName>
        <ecNumber evidence="4 5 6">3.1.3.16</ecNumber>
    </recommendedName>
    <alternativeName>
        <fullName>Nuclear proteasome inhibitor UBLCP1</fullName>
    </alternativeName>
</protein>